<feature type="chain" id="PRO_0000096844" description="Ninein">
    <location>
        <begin position="1"/>
        <end position="2090"/>
    </location>
</feature>
<feature type="domain" description="EF-hand 1" evidence="3">
    <location>
        <begin position="8"/>
        <end position="43"/>
    </location>
</feature>
<feature type="domain" description="EF-hand 2" evidence="3">
    <location>
        <begin position="42"/>
        <end position="77"/>
    </location>
</feature>
<feature type="domain" description="EF-hand 3" evidence="3">
    <location>
        <begin position="182"/>
        <end position="217"/>
    </location>
</feature>
<feature type="domain" description="EF-hand 4" evidence="3">
    <location>
        <begin position="219"/>
        <end position="252"/>
    </location>
</feature>
<feature type="domain" description="EF-hand 5" evidence="3">
    <location>
        <begin position="317"/>
        <end position="352"/>
    </location>
</feature>
<feature type="region of interest" description="Disordered" evidence="4">
    <location>
        <begin position="574"/>
        <end position="595"/>
    </location>
</feature>
<feature type="region of interest" description="Important for interaction with CEP170" evidence="1">
    <location>
        <begin position="802"/>
        <end position="1505"/>
    </location>
</feature>
<feature type="region of interest" description="Disordered" evidence="4">
    <location>
        <begin position="1152"/>
        <end position="1190"/>
    </location>
</feature>
<feature type="coiled-coil region" evidence="2">
    <location>
        <begin position="357"/>
        <end position="570"/>
    </location>
</feature>
<feature type="coiled-coil region" evidence="2">
    <location>
        <begin position="625"/>
        <end position="1027"/>
    </location>
</feature>
<feature type="coiled-coil region" evidence="2">
    <location>
        <begin position="1068"/>
        <end position="1099"/>
    </location>
</feature>
<feature type="coiled-coil region" evidence="2">
    <location>
        <begin position="1181"/>
        <end position="1341"/>
    </location>
</feature>
<feature type="coiled-coil region" evidence="2">
    <location>
        <begin position="1441"/>
        <end position="1816"/>
    </location>
</feature>
<feature type="coiled-coil region" evidence="2">
    <location>
        <begin position="1854"/>
        <end position="1885"/>
    </location>
</feature>
<feature type="coiled-coil region" evidence="2">
    <location>
        <begin position="1922"/>
        <end position="2067"/>
    </location>
</feature>
<feature type="binding site" evidence="2">
    <location>
        <begin position="245"/>
        <end position="252"/>
    </location>
    <ligand>
        <name>GTP</name>
        <dbReference type="ChEBI" id="CHEBI:37565"/>
    </ligand>
</feature>
<feature type="binding site" evidence="2">
    <location>
        <begin position="300"/>
        <end position="304"/>
    </location>
    <ligand>
        <name>GTP</name>
        <dbReference type="ChEBI" id="CHEBI:37565"/>
    </ligand>
</feature>
<feature type="binding site" evidence="2">
    <location>
        <begin position="420"/>
        <end position="423"/>
    </location>
    <ligand>
        <name>GTP</name>
        <dbReference type="ChEBI" id="CHEBI:37565"/>
    </ligand>
</feature>
<feature type="modified residue" description="Phosphoserine" evidence="27">
    <location>
        <position position="152"/>
    </location>
</feature>
<feature type="modified residue" description="Phosphoserine" evidence="1">
    <location>
        <position position="269"/>
    </location>
</feature>
<feature type="modified residue" description="Phosphoserine" evidence="25 26 27">
    <location>
        <position position="1550"/>
    </location>
</feature>
<feature type="modified residue" description="Phosphoserine" evidence="1">
    <location>
        <position position="1837"/>
    </location>
</feature>
<feature type="splice variant" id="VSP_040039" description="In isoform 8." evidence="22">
    <location>
        <begin position="1"/>
        <end position="38"/>
    </location>
</feature>
<feature type="splice variant" id="VSP_010950" description="In isoform 5." evidence="19">
    <original>MDEVEQDQHEARLKELFDSFDTTGTGSLGQEELTD</original>
    <variation>MAEVTVPRVYVVFGIHCIMAKASSDVQVSGFHRKIQHVKNE</variation>
    <location>
        <begin position="1"/>
        <end position="35"/>
    </location>
</feature>
<feature type="splice variant" id="VSP_010952" description="In isoform 2, isoform 3 and isoform 4." evidence="21 22">
    <location>
        <begin position="492"/>
        <end position="508"/>
    </location>
</feature>
<feature type="splice variant" id="VSP_010953" description="In isoform 6 and isoform 9." evidence="18 22">
    <location>
        <begin position="800"/>
        <end position="1512"/>
    </location>
</feature>
<feature type="splice variant" id="VSP_010954" description="In isoform 6." evidence="18">
    <location>
        <position position="1555"/>
    </location>
</feature>
<feature type="splice variant" id="VSP_010955" description="In isoform 6." evidence="18">
    <original>MQHLRSTATPSPSPHAWDLQLLQQQACPM</original>
    <variation>NSVVGSSREGCSSLPEIVCEDAAPEVHCDA</variation>
    <location>
        <begin position="1960"/>
        <end position="1988"/>
    </location>
</feature>
<feature type="splice variant" id="VSP_010956" description="In isoform 6." evidence="18">
    <location>
        <begin position="1989"/>
        <end position="2090"/>
    </location>
</feature>
<feature type="splice variant" id="VSP_010957" description="In isoform 4." evidence="21 22">
    <original>GNQEQLVTVMEERMIEVEQK</original>
    <variation>ALLPEQRAVHADSYRRIGHL</variation>
    <location>
        <begin position="2027"/>
        <end position="2046"/>
    </location>
</feature>
<feature type="splice variant" id="VSP_010958" description="In isoform 4." evidence="21 22">
    <location>
        <begin position="2047"/>
        <end position="2090"/>
    </location>
</feature>
<feature type="splice variant" id="VSP_010960" description="In isoform 3 and isoform 7." evidence="20 23">
    <original>VSLPGHLCSPTSHSSFNSSFTSLYCH</original>
    <variation>LCKNTKADAMVKDLYVENAQLLKALEVTEQRQKTAEKKNYLLEEKIASLSNIVRNLTPAPLTSTPPLRS</variation>
    <location>
        <begin position="2065"/>
        <end position="2090"/>
    </location>
</feature>
<feature type="sequence variant" id="VAR_019453" description="In dbSNP:rs2236316.">
    <original>P</original>
    <variation>A</variation>
    <location>
        <position position="1111"/>
    </location>
</feature>
<feature type="sequence variant" id="VAR_051235" description="In dbSNP:rs12882191." evidence="5 6 12">
    <original>Q</original>
    <variation>P</variation>
    <location>
        <position position="1125"/>
    </location>
</feature>
<feature type="sequence variant" id="VAR_069083" description="In SCKL7; does not disrupt protein expression or localization or affect mitotic functions in an obvious way; dbSNP:rs187464517." evidence="15">
    <original>Q</original>
    <variation>R</variation>
    <location>
        <position position="1222"/>
    </location>
</feature>
<feature type="sequence variant" id="VAR_019454" description="In dbSNP:rs2073347." evidence="5 6 12 13">
    <original>G</original>
    <variation>E</variation>
    <location>
        <position position="1320"/>
    </location>
</feature>
<feature type="sequence variant" id="VAR_069084" description="In SCKL7; does not disrupt protein expression or localization or affect mitotic functions in an obvious way; dbSNP:rs387907308." evidence="15">
    <original>N</original>
    <variation>S</variation>
    <location>
        <position position="1709"/>
    </location>
</feature>
<feature type="sequence variant" id="VAR_019455" description="In dbSNP:rs12717411.">
    <original>S</original>
    <variation>T</variation>
    <location>
        <position position="1837"/>
    </location>
</feature>
<feature type="sequence variant" id="VAR_051236" description="In dbSNP:rs2295847.">
    <original>Q</original>
    <variation>E</variation>
    <location>
        <position position="1934"/>
    </location>
</feature>
<feature type="sequence conflict" description="In Ref. 1; AAF23015 and 2; AAG33512." evidence="24" ref="1 2">
    <original>H</original>
    <variation>Y</variation>
    <location>
        <position position="137"/>
    </location>
</feature>
<feature type="sequence conflict" description="In Ref. 1; AAF23015." evidence="24" ref="1">
    <original>S</original>
    <variation>F</variation>
    <location>
        <position position="177"/>
    </location>
</feature>
<feature type="sequence conflict" description="In Ref. 2; AAG33512." evidence="24" ref="2">
    <original>N</original>
    <variation>D</variation>
    <location>
        <position position="203"/>
    </location>
</feature>
<feature type="sequence conflict" description="In Ref. 2; AAG33512." evidence="24" ref="2">
    <original>M</original>
    <variation>I</variation>
    <location>
        <position position="223"/>
    </location>
</feature>
<feature type="sequence conflict" description="In Ref. 2; AAG33512." evidence="24" ref="2">
    <original>F</original>
    <variation>I</variation>
    <location>
        <position position="295"/>
    </location>
</feature>
<feature type="sequence conflict" description="In Ref. 2; AAG33512." evidence="24" ref="2">
    <original>I</original>
    <variation>V</variation>
    <location>
        <position position="369"/>
    </location>
</feature>
<feature type="sequence conflict" description="In Ref. 2; AAG33512." evidence="24" ref="2">
    <original>L</original>
    <variation>S</variation>
    <location>
        <position position="399"/>
    </location>
</feature>
<feature type="sequence conflict" description="In Ref. 2; AAG33512." evidence="24" ref="2">
    <original>L</original>
    <variation>F</variation>
    <location>
        <position position="568"/>
    </location>
</feature>
<feature type="sequence conflict" description="In Ref. 1; AAF23015." evidence="24" ref="1">
    <original>R</original>
    <variation>I</variation>
    <location>
        <position position="809"/>
    </location>
</feature>
<feature type="sequence conflict" description="In Ref. 2; AAG33512." evidence="24" ref="2">
    <original>S</original>
    <variation>T</variation>
    <location>
        <position position="812"/>
    </location>
</feature>
<feature type="sequence conflict" description="In Ref. 2; AAG33512." evidence="24" ref="2">
    <original>K</original>
    <variation>I</variation>
    <location>
        <position position="945"/>
    </location>
</feature>
<feature type="sequence conflict" description="In Ref. 2; AAG33512." evidence="24" ref="2">
    <original>D</original>
    <variation>A</variation>
    <location>
        <position position="977"/>
    </location>
</feature>
<feature type="sequence conflict" description="In Ref. 1; AAF23015." evidence="24" ref="1">
    <original>R</original>
    <variation>G</variation>
    <location>
        <position position="980"/>
    </location>
</feature>
<feature type="sequence conflict" description="In Ref. 2; AAG33512." evidence="24" ref="2">
    <original>Q</original>
    <variation>H</variation>
    <location>
        <position position="1054"/>
    </location>
</feature>
<feature type="sequence conflict" description="In Ref. 2; AAG33512." evidence="24" ref="2">
    <original>L</original>
    <variation>F</variation>
    <location>
        <position position="1067"/>
    </location>
</feature>
<feature type="sequence conflict" description="In Ref. 1; AAF23015." evidence="24" ref="1">
    <original>L</original>
    <variation>Q</variation>
    <location>
        <position position="1070"/>
    </location>
</feature>
<feature type="sequence conflict" description="In Ref. 1; AAF23015." evidence="24" ref="1">
    <original>D</original>
    <variation>G</variation>
    <location>
        <position position="1150"/>
    </location>
</feature>
<feature type="sequence conflict" description="In Ref. 1; AAF23015." evidence="24" ref="1">
    <original>M</original>
    <variation>I</variation>
    <location>
        <position position="1237"/>
    </location>
</feature>
<gene>
    <name type="primary">NIN</name>
    <name type="synonym">KIAA1565</name>
</gene>
<dbReference type="EMBL" id="AF212162">
    <property type="protein sequence ID" value="AAF23015.2"/>
    <property type="molecule type" value="mRNA"/>
</dbReference>
<dbReference type="EMBL" id="AF302773">
    <property type="protein sequence ID" value="AAG33512.2"/>
    <property type="molecule type" value="mRNA"/>
</dbReference>
<dbReference type="EMBL" id="AF223937">
    <property type="protein sequence ID" value="AAK00628.1"/>
    <property type="status" value="ALT_SEQ"/>
    <property type="molecule type" value="mRNA"/>
</dbReference>
<dbReference type="EMBL" id="AF223938">
    <property type="protein sequence ID" value="AAK00629.1"/>
    <property type="status" value="ALT_SEQ"/>
    <property type="molecule type" value="mRNA"/>
</dbReference>
<dbReference type="EMBL" id="AF223939">
    <property type="protein sequence ID" value="AAK00630.1"/>
    <property type="status" value="ALT_SEQ"/>
    <property type="molecule type" value="mRNA"/>
</dbReference>
<dbReference type="EMBL" id="AB046785">
    <property type="protein sequence ID" value="BAB13391.2"/>
    <property type="status" value="ALT_INIT"/>
    <property type="molecule type" value="mRNA"/>
</dbReference>
<dbReference type="EMBL" id="AL133485">
    <property type="status" value="NOT_ANNOTATED_CDS"/>
    <property type="molecule type" value="Genomic_DNA"/>
</dbReference>
<dbReference type="EMBL" id="AL606834">
    <property type="status" value="NOT_ANNOTATED_CDS"/>
    <property type="molecule type" value="Genomic_DNA"/>
</dbReference>
<dbReference type="EMBL" id="BC034708">
    <property type="protein sequence ID" value="AAH34708.2"/>
    <property type="molecule type" value="mRNA"/>
</dbReference>
<dbReference type="EMBL" id="BC065521">
    <property type="protein sequence ID" value="AAH65521.1"/>
    <property type="status" value="ALT_SEQ"/>
    <property type="molecule type" value="mRNA"/>
</dbReference>
<dbReference type="EMBL" id="BC090932">
    <property type="protein sequence ID" value="AAH90932.1"/>
    <property type="molecule type" value="mRNA"/>
</dbReference>
<dbReference type="EMBL" id="AY027794">
    <property type="protein sequence ID" value="AAK27375.1"/>
    <property type="molecule type" value="mRNA"/>
</dbReference>
<dbReference type="EMBL" id="AY027795">
    <property type="protein sequence ID" value="AAK27376.1"/>
    <property type="molecule type" value="mRNA"/>
</dbReference>
<dbReference type="EMBL" id="AY027796">
    <property type="protein sequence ID" value="AAK27377.1"/>
    <property type="molecule type" value="mRNA"/>
</dbReference>
<dbReference type="EMBL" id="AF186776">
    <property type="protein sequence ID" value="AAG17027.1"/>
    <property type="molecule type" value="mRNA"/>
</dbReference>
<dbReference type="EMBL" id="AK027054">
    <property type="protein sequence ID" value="BAB15640.1"/>
    <property type="status" value="ALT_INIT"/>
    <property type="molecule type" value="mRNA"/>
</dbReference>
<dbReference type="CCDS" id="CCDS32078.2">
    <molecule id="Q8N4C6-11"/>
</dbReference>
<dbReference type="CCDS" id="CCDS32079.1">
    <molecule id="Q8N4C6-1"/>
</dbReference>
<dbReference type="CCDS" id="CCDS91876.1">
    <molecule id="Q8N4C6-7"/>
</dbReference>
<dbReference type="RefSeq" id="NP_057434.4">
    <molecule id="Q8N4C6-11"/>
    <property type="nucleotide sequence ID" value="NM_016350.4"/>
</dbReference>
<dbReference type="RefSeq" id="NP_065972.3">
    <molecule id="Q8N4C6-7"/>
    <property type="nucleotide sequence ID" value="NM_020921.3"/>
</dbReference>
<dbReference type="RefSeq" id="NP_891989.2">
    <property type="nucleotide sequence ID" value="NM_182944.2"/>
</dbReference>
<dbReference type="RefSeq" id="NP_891991.2">
    <molecule id="Q8N4C6-1"/>
    <property type="nucleotide sequence ID" value="NM_182946.2"/>
</dbReference>
<dbReference type="RefSeq" id="XP_011535125.1">
    <property type="nucleotide sequence ID" value="XM_011536823.2"/>
</dbReference>
<dbReference type="SMR" id="Q8N4C6"/>
<dbReference type="BioGRID" id="119372">
    <property type="interactions" value="392"/>
</dbReference>
<dbReference type="CORUM" id="Q8N4C6"/>
<dbReference type="FunCoup" id="Q8N4C6">
    <property type="interactions" value="973"/>
</dbReference>
<dbReference type="IntAct" id="Q8N4C6">
    <property type="interactions" value="160"/>
</dbReference>
<dbReference type="MINT" id="Q8N4C6"/>
<dbReference type="STRING" id="9606.ENSP00000371472"/>
<dbReference type="BindingDB" id="Q8N4C6"/>
<dbReference type="GlyGen" id="Q8N4C6">
    <property type="glycosylation" value="7 sites, 1 O-linked glycan (6 sites)"/>
</dbReference>
<dbReference type="iPTMnet" id="Q8N4C6"/>
<dbReference type="PhosphoSitePlus" id="Q8N4C6"/>
<dbReference type="BioMuta" id="NIN"/>
<dbReference type="DMDM" id="311033487"/>
<dbReference type="jPOST" id="Q8N4C6"/>
<dbReference type="MassIVE" id="Q8N4C6"/>
<dbReference type="PaxDb" id="9606-ENSP00000371472"/>
<dbReference type="PeptideAtlas" id="Q8N4C6"/>
<dbReference type="ProteomicsDB" id="71907">
    <molecule id="Q8N4C6-1"/>
</dbReference>
<dbReference type="ProteomicsDB" id="71908">
    <molecule id="Q8N4C6-10"/>
</dbReference>
<dbReference type="ProteomicsDB" id="71909">
    <molecule id="Q8N4C6-11"/>
</dbReference>
<dbReference type="ProteomicsDB" id="71910">
    <molecule id="Q8N4C6-2"/>
</dbReference>
<dbReference type="ProteomicsDB" id="71911">
    <molecule id="Q8N4C6-4"/>
</dbReference>
<dbReference type="ProteomicsDB" id="71912">
    <molecule id="Q8N4C6-5"/>
</dbReference>
<dbReference type="ProteomicsDB" id="71913">
    <molecule id="Q8N4C6-6"/>
</dbReference>
<dbReference type="ProteomicsDB" id="71914">
    <molecule id="Q8N4C6-7"/>
</dbReference>
<dbReference type="ProteomicsDB" id="71915">
    <molecule id="Q8N4C6-9"/>
</dbReference>
<dbReference type="Pumba" id="Q8N4C6"/>
<dbReference type="Antibodypedia" id="23688">
    <property type="antibodies" value="144 antibodies from 25 providers"/>
</dbReference>
<dbReference type="DNASU" id="51199"/>
<dbReference type="Ensembl" id="ENST00000324330.13">
    <molecule id="Q8N4C6-11"/>
    <property type="protein sequence ID" value="ENSP00000324210.10"/>
    <property type="gene ID" value="ENSG00000100503.27"/>
</dbReference>
<dbReference type="Ensembl" id="ENST00000382041.7">
    <molecule id="Q8N4C6-1"/>
    <property type="protein sequence ID" value="ENSP00000371472.3"/>
    <property type="gene ID" value="ENSG00000100503.27"/>
</dbReference>
<dbReference type="Ensembl" id="ENST00000382043.8">
    <molecule id="Q8N4C6-11"/>
    <property type="protein sequence ID" value="ENSP00000371474.4"/>
    <property type="gene ID" value="ENSG00000100503.27"/>
</dbReference>
<dbReference type="Ensembl" id="ENST00000530997.7">
    <molecule id="Q8N4C6-7"/>
    <property type="protein sequence ID" value="ENSP00000436092.2"/>
    <property type="gene ID" value="ENSG00000100503.27"/>
</dbReference>
<dbReference type="GeneID" id="51199"/>
<dbReference type="KEGG" id="hsa:51199"/>
<dbReference type="MANE-Select" id="ENST00000530997.7">
    <molecule id="Q8N4C6-7"/>
    <property type="protein sequence ID" value="ENSP00000436092.2"/>
    <property type="RefSeq nucleotide sequence ID" value="NM_020921.4"/>
    <property type="RefSeq protein sequence ID" value="NP_065972.4"/>
</dbReference>
<dbReference type="UCSC" id="uc001wyi.3">
    <molecule id="Q8N4C6-1"/>
    <property type="organism name" value="human"/>
</dbReference>
<dbReference type="AGR" id="HGNC:14906"/>
<dbReference type="CTD" id="51199"/>
<dbReference type="DisGeNET" id="51199"/>
<dbReference type="GeneCards" id="NIN"/>
<dbReference type="HGNC" id="HGNC:14906">
    <property type="gene designation" value="NIN"/>
</dbReference>
<dbReference type="HPA" id="ENSG00000100503">
    <property type="expression patterns" value="Tissue enhanced (bone)"/>
</dbReference>
<dbReference type="MalaCards" id="NIN"/>
<dbReference type="MIM" id="608684">
    <property type="type" value="gene"/>
</dbReference>
<dbReference type="MIM" id="614851">
    <property type="type" value="phenotype"/>
</dbReference>
<dbReference type="neXtProt" id="NX_Q8N4C6"/>
<dbReference type="OpenTargets" id="ENSG00000100503"/>
<dbReference type="Orphanet" id="319675">
    <property type="disease" value="Microcephalic primordial dwarfism, Dauber type"/>
</dbReference>
<dbReference type="PharmGKB" id="PA31630"/>
<dbReference type="VEuPathDB" id="HostDB:ENSG00000100503"/>
<dbReference type="eggNOG" id="ENOG502QZCC">
    <property type="taxonomic scope" value="Eukaryota"/>
</dbReference>
<dbReference type="GeneTree" id="ENSGT00660000095541"/>
<dbReference type="HOGENOM" id="CLU_001462_1_1_1"/>
<dbReference type="InParanoid" id="Q8N4C6"/>
<dbReference type="OMA" id="QKVELLX"/>
<dbReference type="OrthoDB" id="5799458at2759"/>
<dbReference type="PAN-GO" id="Q8N4C6">
    <property type="GO annotations" value="8 GO annotations based on evolutionary models"/>
</dbReference>
<dbReference type="PhylomeDB" id="Q8N4C6"/>
<dbReference type="TreeFam" id="TF325139"/>
<dbReference type="PathwayCommons" id="Q8N4C6"/>
<dbReference type="SignaLink" id="Q8N4C6"/>
<dbReference type="SIGNOR" id="Q8N4C6"/>
<dbReference type="BioGRID-ORCS" id="51199">
    <property type="hits" value="15 hits in 1161 CRISPR screens"/>
</dbReference>
<dbReference type="ChiTaRS" id="NIN">
    <property type="organism name" value="human"/>
</dbReference>
<dbReference type="GeneWiki" id="NIN_(gene)"/>
<dbReference type="GenomeRNAi" id="51199"/>
<dbReference type="Pharos" id="Q8N4C6">
    <property type="development level" value="Tbio"/>
</dbReference>
<dbReference type="PRO" id="PR:Q8N4C6"/>
<dbReference type="Proteomes" id="UP000005640">
    <property type="component" value="Chromosome 14"/>
</dbReference>
<dbReference type="RNAct" id="Q8N4C6">
    <property type="molecule type" value="protein"/>
</dbReference>
<dbReference type="Bgee" id="ENSG00000100503">
    <property type="expression patterns" value="Expressed in oviduct epithelium and 188 other cell types or tissues"/>
</dbReference>
<dbReference type="ExpressionAtlas" id="Q8N4C6">
    <property type="expression patterns" value="baseline and differential"/>
</dbReference>
<dbReference type="GO" id="GO:0045177">
    <property type="term" value="C:apical part of cell"/>
    <property type="evidence" value="ECO:0007669"/>
    <property type="project" value="Ensembl"/>
</dbReference>
<dbReference type="GO" id="GO:0044295">
    <property type="term" value="C:axonal growth cone"/>
    <property type="evidence" value="ECO:0007669"/>
    <property type="project" value="Ensembl"/>
</dbReference>
<dbReference type="GO" id="GO:0120103">
    <property type="term" value="C:centriolar subdistal appendage"/>
    <property type="evidence" value="ECO:0000314"/>
    <property type="project" value="GO_Central"/>
</dbReference>
<dbReference type="GO" id="GO:0005814">
    <property type="term" value="C:centriole"/>
    <property type="evidence" value="ECO:0000314"/>
    <property type="project" value="UniProtKB"/>
</dbReference>
<dbReference type="GO" id="GO:0005813">
    <property type="term" value="C:centrosome"/>
    <property type="evidence" value="ECO:0000314"/>
    <property type="project" value="HPA"/>
</dbReference>
<dbReference type="GO" id="GO:0036064">
    <property type="term" value="C:ciliary basal body"/>
    <property type="evidence" value="ECO:0000314"/>
    <property type="project" value="HPA"/>
</dbReference>
<dbReference type="GO" id="GO:0097539">
    <property type="term" value="C:ciliary transition fiber"/>
    <property type="evidence" value="ECO:0000318"/>
    <property type="project" value="GO_Central"/>
</dbReference>
<dbReference type="GO" id="GO:0005881">
    <property type="term" value="C:cytoplasmic microtubule"/>
    <property type="evidence" value="ECO:0007669"/>
    <property type="project" value="Ensembl"/>
</dbReference>
<dbReference type="GO" id="GO:0030425">
    <property type="term" value="C:dendrite"/>
    <property type="evidence" value="ECO:0007669"/>
    <property type="project" value="Ensembl"/>
</dbReference>
<dbReference type="GO" id="GO:0072686">
    <property type="term" value="C:mitotic spindle"/>
    <property type="evidence" value="ECO:0000314"/>
    <property type="project" value="UniProtKB"/>
</dbReference>
<dbReference type="GO" id="GO:0097431">
    <property type="term" value="C:mitotic spindle pole"/>
    <property type="evidence" value="ECO:0000318"/>
    <property type="project" value="GO_Central"/>
</dbReference>
<dbReference type="GO" id="GO:0005730">
    <property type="term" value="C:nucleolus"/>
    <property type="evidence" value="ECO:0000314"/>
    <property type="project" value="HPA"/>
</dbReference>
<dbReference type="GO" id="GO:0005654">
    <property type="term" value="C:nucleoplasm"/>
    <property type="evidence" value="ECO:0000314"/>
    <property type="project" value="HPA"/>
</dbReference>
<dbReference type="GO" id="GO:0000242">
    <property type="term" value="C:pericentriolar material"/>
    <property type="evidence" value="ECO:0000314"/>
    <property type="project" value="MGI"/>
</dbReference>
<dbReference type="GO" id="GO:0005886">
    <property type="term" value="C:plasma membrane"/>
    <property type="evidence" value="ECO:0007669"/>
    <property type="project" value="Ensembl"/>
</dbReference>
<dbReference type="GO" id="GO:0000922">
    <property type="term" value="C:spindle pole"/>
    <property type="evidence" value="ECO:0000315"/>
    <property type="project" value="MGI"/>
</dbReference>
<dbReference type="GO" id="GO:0005509">
    <property type="term" value="F:calcium ion binding"/>
    <property type="evidence" value="ECO:0007669"/>
    <property type="project" value="InterPro"/>
</dbReference>
<dbReference type="GO" id="GO:0005525">
    <property type="term" value="F:GTP binding"/>
    <property type="evidence" value="ECO:0007669"/>
    <property type="project" value="UniProtKB-KW"/>
</dbReference>
<dbReference type="GO" id="GO:0051011">
    <property type="term" value="F:microtubule minus-end binding"/>
    <property type="evidence" value="ECO:0007669"/>
    <property type="project" value="Ensembl"/>
</dbReference>
<dbReference type="GO" id="GO:0010457">
    <property type="term" value="P:centriole-centriole cohesion"/>
    <property type="evidence" value="ECO:0000315"/>
    <property type="project" value="GO_Central"/>
</dbReference>
<dbReference type="GO" id="GO:0051642">
    <property type="term" value="P:centrosome localization"/>
    <property type="evidence" value="ECO:0000318"/>
    <property type="project" value="GO_Central"/>
</dbReference>
<dbReference type="GO" id="GO:0090222">
    <property type="term" value="P:centrosome-templated microtubule nucleation"/>
    <property type="evidence" value="ECO:0000318"/>
    <property type="project" value="GO_Central"/>
</dbReference>
<dbReference type="GO" id="GO:0048668">
    <property type="term" value="P:collateral sprouting"/>
    <property type="evidence" value="ECO:0007669"/>
    <property type="project" value="Ensembl"/>
</dbReference>
<dbReference type="GO" id="GO:0021540">
    <property type="term" value="P:corpus callosum morphogenesis"/>
    <property type="evidence" value="ECO:0007669"/>
    <property type="project" value="Ensembl"/>
</dbReference>
<dbReference type="GO" id="GO:0021957">
    <property type="term" value="P:corticospinal tract morphogenesis"/>
    <property type="evidence" value="ECO:0007669"/>
    <property type="project" value="Ensembl"/>
</dbReference>
<dbReference type="GO" id="GO:0034454">
    <property type="term" value="P:microtubule anchoring at centrosome"/>
    <property type="evidence" value="ECO:0000315"/>
    <property type="project" value="UniProtKB"/>
</dbReference>
<dbReference type="GO" id="GO:0050772">
    <property type="term" value="P:positive regulation of axonogenesis"/>
    <property type="evidence" value="ECO:0007669"/>
    <property type="project" value="Ensembl"/>
</dbReference>
<dbReference type="GO" id="GO:0008104">
    <property type="term" value="P:protein localization"/>
    <property type="evidence" value="ECO:0000315"/>
    <property type="project" value="GO_Central"/>
</dbReference>
<dbReference type="FunFam" id="1.10.238.10:FF:000094">
    <property type="entry name" value="ninein isoform X7"/>
    <property type="match status" value="1"/>
</dbReference>
<dbReference type="Gene3D" id="1.10.238.10">
    <property type="entry name" value="EF-hand"/>
    <property type="match status" value="2"/>
</dbReference>
<dbReference type="InterPro" id="IPR011992">
    <property type="entry name" value="EF-hand-dom_pair"/>
</dbReference>
<dbReference type="InterPro" id="IPR002048">
    <property type="entry name" value="EF_hand_dom"/>
</dbReference>
<dbReference type="PANTHER" id="PTHR18905">
    <property type="entry name" value="NINEIN"/>
    <property type="match status" value="1"/>
</dbReference>
<dbReference type="PANTHER" id="PTHR18905:SF12">
    <property type="entry name" value="NINEIN-LIKE PROTEIN"/>
    <property type="match status" value="1"/>
</dbReference>
<dbReference type="SUPFAM" id="SSF47473">
    <property type="entry name" value="EF-hand"/>
    <property type="match status" value="1"/>
</dbReference>
<dbReference type="PROSITE" id="PS50222">
    <property type="entry name" value="EF_HAND_2"/>
    <property type="match status" value="5"/>
</dbReference>
<evidence type="ECO:0000250" key="1">
    <source>
        <dbReference type="UniProtKB" id="Q61043"/>
    </source>
</evidence>
<evidence type="ECO:0000255" key="2"/>
<evidence type="ECO:0000255" key="3">
    <source>
        <dbReference type="PROSITE-ProRule" id="PRU00448"/>
    </source>
</evidence>
<evidence type="ECO:0000256" key="4">
    <source>
        <dbReference type="SAM" id="MobiDB-lite"/>
    </source>
</evidence>
<evidence type="ECO:0000269" key="5">
    <source>
    </source>
</evidence>
<evidence type="ECO:0000269" key="6">
    <source>
    </source>
</evidence>
<evidence type="ECO:0000269" key="7">
    <source>
    </source>
</evidence>
<evidence type="ECO:0000269" key="8">
    <source>
    </source>
</evidence>
<evidence type="ECO:0000269" key="9">
    <source>
    </source>
</evidence>
<evidence type="ECO:0000269" key="10">
    <source>
    </source>
</evidence>
<evidence type="ECO:0000269" key="11">
    <source>
    </source>
</evidence>
<evidence type="ECO:0000269" key="12">
    <source>
    </source>
</evidence>
<evidence type="ECO:0000269" key="13">
    <source>
    </source>
</evidence>
<evidence type="ECO:0000269" key="14">
    <source>
    </source>
</evidence>
<evidence type="ECO:0000269" key="15">
    <source>
    </source>
</evidence>
<evidence type="ECO:0000269" key="16">
    <source>
    </source>
</evidence>
<evidence type="ECO:0000269" key="17">
    <source>
    </source>
</evidence>
<evidence type="ECO:0000303" key="18">
    <source>
    </source>
</evidence>
<evidence type="ECO:0000303" key="19">
    <source>
    </source>
</evidence>
<evidence type="ECO:0000303" key="20">
    <source>
    </source>
</evidence>
<evidence type="ECO:0000303" key="21">
    <source>
    </source>
</evidence>
<evidence type="ECO:0000303" key="22">
    <source>
    </source>
</evidence>
<evidence type="ECO:0000303" key="23">
    <source ref="8"/>
</evidence>
<evidence type="ECO:0000305" key="24"/>
<evidence type="ECO:0007744" key="25">
    <source>
    </source>
</evidence>
<evidence type="ECO:0007744" key="26">
    <source>
    </source>
</evidence>
<evidence type="ECO:0007744" key="27">
    <source>
    </source>
</evidence>
<keyword id="KW-0025">Alternative splicing</keyword>
<keyword id="KW-0175">Coiled coil</keyword>
<keyword id="KW-0963">Cytoplasm</keyword>
<keyword id="KW-0206">Cytoskeleton</keyword>
<keyword id="KW-0225">Disease variant</keyword>
<keyword id="KW-0242">Dwarfism</keyword>
<keyword id="KW-0342">GTP-binding</keyword>
<keyword id="KW-0991">Intellectual disability</keyword>
<keyword id="KW-0493">Microtubule</keyword>
<keyword id="KW-0547">Nucleotide-binding</keyword>
<keyword id="KW-0597">Phosphoprotein</keyword>
<keyword id="KW-1267">Proteomics identification</keyword>
<keyword id="KW-1185">Reference proteome</keyword>
<keyword id="KW-0677">Repeat</keyword>
<accession>Q8N4C6</accession>
<accession>A6NDB8</accession>
<accession>B7WPA3</accession>
<accession>C9JSB6</accession>
<accession>C9JSG2</accession>
<accession>C9JXL2</accession>
<accession>Q5BKU3</accession>
<accession>Q6P0P6</accession>
<accession>Q9BWU6</accession>
<accession>Q9C012</accession>
<accession>Q9C013</accession>
<accession>Q9C014</accession>
<accession>Q9H5I6</accession>
<accession>Q9HAT7</accession>
<accession>Q9HBY5</accession>
<accession>Q9HCK7</accession>
<accession>Q9UH61</accession>
<organism>
    <name type="scientific">Homo sapiens</name>
    <name type="common">Human</name>
    <dbReference type="NCBI Taxonomy" id="9606"/>
    <lineage>
        <taxon>Eukaryota</taxon>
        <taxon>Metazoa</taxon>
        <taxon>Chordata</taxon>
        <taxon>Craniata</taxon>
        <taxon>Vertebrata</taxon>
        <taxon>Euteleostomi</taxon>
        <taxon>Mammalia</taxon>
        <taxon>Eutheria</taxon>
        <taxon>Euarchontoglires</taxon>
        <taxon>Primates</taxon>
        <taxon>Haplorrhini</taxon>
        <taxon>Catarrhini</taxon>
        <taxon>Hominidae</taxon>
        <taxon>Homo</taxon>
    </lineage>
</organism>
<proteinExistence type="evidence at protein level"/>
<name>NIN_HUMAN</name>
<reference key="1">
    <citation type="journal article" date="2000" name="Biochim. Biophys. Acta">
        <title>Cloning and characterization of a novel human ninein protein that interacts with the glycogen synthase kinase 3beta.</title>
        <authorList>
            <person name="Hong Y.-R."/>
            <person name="Chen C.-H."/>
            <person name="Chang J.-H."/>
            <person name="Wang S.-K."/>
            <person name="Sy W.-D."/>
            <person name="Chou C.-K."/>
            <person name="Howng S.-L."/>
        </authorList>
    </citation>
    <scope>NUCLEOTIDE SEQUENCE [MRNA] (ISOFORM 5)</scope>
    <scope>SUBCELLULAR LOCATION</scope>
    <scope>TISSUE SPECIFICITY</scope>
    <scope>INTERACTION WITH GSK3B</scope>
    <scope>VARIANTS PRO-1125 AND GLU-1320</scope>
    <source>
        <tissue>Fetal liver</tissue>
    </source>
</reference>
<reference key="2">
    <citation type="journal article" date="2000" name="Biochem. Biophys. Res. Commun.">
        <title>Genomic organization and molecular characterization of the human ninein gene.</title>
        <authorList>
            <person name="Hong Y.-R."/>
            <person name="Chen C.-H."/>
            <person name="Chuo M.-H."/>
            <person name="Liou S.-Y."/>
            <person name="Howng S.-L."/>
        </authorList>
    </citation>
    <scope>NUCLEOTIDE SEQUENCE [MRNA] (ISOFORM 1)</scope>
    <scope>TISSUE SPECIFICITY</scope>
    <scope>VARIANTS PRO-1125 AND GLU-1320</scope>
</reference>
<reference key="3">
    <citation type="journal article" date="2004" name="Cell Cycle">
        <title>Human ninein is a centrosomal autoantigen recognized by CREST patient sera and plays a regulatory role in microtubule nucleation.</title>
        <authorList>
            <person name="Stillwell E.E."/>
            <person name="Zhou J."/>
            <person name="Joshi H.C."/>
        </authorList>
    </citation>
    <scope>NUCLEOTIDE SEQUENCE [MRNA] (ISOFORMS 2 AND 4)</scope>
    <scope>PARTIAL NUCLEOTIDE SEQUENCE [MRNA] (ISOFORM 3)</scope>
    <scope>FUNCTION</scope>
    <scope>ALTERNATIVE SPLICING</scope>
    <scope>SUBCELLULAR LOCATION</scope>
    <scope>VARIANTS PRO-1125 AND GLU-1320</scope>
    <source>
        <tissue>Thymus</tissue>
    </source>
</reference>
<reference key="4">
    <citation type="journal article" date="2000" name="DNA Res.">
        <title>Prediction of the coding sequences of unidentified human genes. XVIII. The complete sequences of 100 new cDNA clones from brain which code for large proteins in vitro.</title>
        <authorList>
            <person name="Nagase T."/>
            <person name="Kikuno R."/>
            <person name="Nakayama M."/>
            <person name="Hirosawa M."/>
            <person name="Ohara O."/>
        </authorList>
    </citation>
    <scope>NUCLEOTIDE SEQUENCE [LARGE SCALE MRNA] (ISOFORM 6)</scope>
    <source>
        <tissue>Brain</tissue>
    </source>
</reference>
<reference key="5">
    <citation type="journal article" date="2002" name="DNA Res.">
        <title>Construction of expression-ready cDNA clones for KIAA genes: manual curation of 330 KIAA cDNA clones.</title>
        <authorList>
            <person name="Nakajima D."/>
            <person name="Okazaki N."/>
            <person name="Yamakawa H."/>
            <person name="Kikuno R."/>
            <person name="Ohara O."/>
            <person name="Nagase T."/>
        </authorList>
    </citation>
    <scope>SEQUENCE REVISION</scope>
</reference>
<reference key="6">
    <citation type="journal article" date="2003" name="Nature">
        <title>The DNA sequence and analysis of human chromosome 14.</title>
        <authorList>
            <person name="Heilig R."/>
            <person name="Eckenberg R."/>
            <person name="Petit J.-L."/>
            <person name="Fonknechten N."/>
            <person name="Da Silva C."/>
            <person name="Cattolico L."/>
            <person name="Levy M."/>
            <person name="Barbe V."/>
            <person name="De Berardinis V."/>
            <person name="Ureta-Vidal A."/>
            <person name="Pelletier E."/>
            <person name="Vico V."/>
            <person name="Anthouard V."/>
            <person name="Rowen L."/>
            <person name="Madan A."/>
            <person name="Qin S."/>
            <person name="Sun H."/>
            <person name="Du H."/>
            <person name="Pepin K."/>
            <person name="Artiguenave F."/>
            <person name="Robert C."/>
            <person name="Cruaud C."/>
            <person name="Bruels T."/>
            <person name="Jaillon O."/>
            <person name="Friedlander L."/>
            <person name="Samson G."/>
            <person name="Brottier P."/>
            <person name="Cure S."/>
            <person name="Segurens B."/>
            <person name="Aniere F."/>
            <person name="Samain S."/>
            <person name="Crespeau H."/>
            <person name="Abbasi N."/>
            <person name="Aiach N."/>
            <person name="Boscus D."/>
            <person name="Dickhoff R."/>
            <person name="Dors M."/>
            <person name="Dubois I."/>
            <person name="Friedman C."/>
            <person name="Gouyvenoux M."/>
            <person name="James R."/>
            <person name="Madan A."/>
            <person name="Mairey-Estrada B."/>
            <person name="Mangenot S."/>
            <person name="Martins N."/>
            <person name="Menard M."/>
            <person name="Oztas S."/>
            <person name="Ratcliffe A."/>
            <person name="Shaffer T."/>
            <person name="Trask B."/>
            <person name="Vacherie B."/>
            <person name="Bellemere C."/>
            <person name="Belser C."/>
            <person name="Besnard-Gonnet M."/>
            <person name="Bartol-Mavel D."/>
            <person name="Boutard M."/>
            <person name="Briez-Silla S."/>
            <person name="Combette S."/>
            <person name="Dufosse-Laurent V."/>
            <person name="Ferron C."/>
            <person name="Lechaplais C."/>
            <person name="Louesse C."/>
            <person name="Muselet D."/>
            <person name="Magdelenat G."/>
            <person name="Pateau E."/>
            <person name="Petit E."/>
            <person name="Sirvain-Trukniewicz P."/>
            <person name="Trybou A."/>
            <person name="Vega-Czarny N."/>
            <person name="Bataille E."/>
            <person name="Bluet E."/>
            <person name="Bordelais I."/>
            <person name="Dubois M."/>
            <person name="Dumont C."/>
            <person name="Guerin T."/>
            <person name="Haffray S."/>
            <person name="Hammadi R."/>
            <person name="Muanga J."/>
            <person name="Pellouin V."/>
            <person name="Robert D."/>
            <person name="Wunderle E."/>
            <person name="Gauguet G."/>
            <person name="Roy A."/>
            <person name="Sainte-Marthe L."/>
            <person name="Verdier J."/>
            <person name="Verdier-Discala C."/>
            <person name="Hillier L.W."/>
            <person name="Fulton L."/>
            <person name="McPherson J."/>
            <person name="Matsuda F."/>
            <person name="Wilson R."/>
            <person name="Scarpelli C."/>
            <person name="Gyapay G."/>
            <person name="Wincker P."/>
            <person name="Saurin W."/>
            <person name="Quetier F."/>
            <person name="Waterston R."/>
            <person name="Hood L."/>
            <person name="Weissenbach J."/>
        </authorList>
    </citation>
    <scope>NUCLEOTIDE SEQUENCE [LARGE SCALE GENOMIC DNA]</scope>
</reference>
<reference key="7">
    <citation type="journal article" date="2004" name="Genome Res.">
        <title>The status, quality, and expansion of the NIH full-length cDNA project: the Mammalian Gene Collection (MGC).</title>
        <authorList>
            <consortium name="The MGC Project Team"/>
        </authorList>
    </citation>
    <scope>NUCLEOTIDE SEQUENCE [LARGE SCALE MRNA] (ISOFORM 9)</scope>
    <scope>NUCLEOTIDE SEQUENCE [LARGE SCALE MRNA] OF 1-434 (ISOFORM 8)</scope>
    <scope>NUCLEOTIDE SEQUENCE [LARGE SCALE MRNA] OF 1877-2090 (ISOFORM 4)</scope>
    <source>
        <tissue>Lymph</tissue>
    </source>
</reference>
<reference key="8">
    <citation type="submission" date="2001-02" db="EMBL/GenBank/DDBJ databases">
        <title>3' isoforms of human ninein.</title>
        <authorList>
            <person name="Choquette M.C."/>
            <person name="de Medicis E."/>
        </authorList>
    </citation>
    <scope>NUCLEOTIDE SEQUENCE [MRNA] OF 1561-2090 (ISOFORMS 1 AND 7)</scope>
    <source>
        <tissue>Bone marrow</tissue>
    </source>
</reference>
<reference key="9">
    <citation type="journal article" date="2004" name="Nat. Genet.">
        <title>Complete sequencing and characterization of 21,243 full-length human cDNAs.</title>
        <authorList>
            <person name="Ota T."/>
            <person name="Suzuki Y."/>
            <person name="Nishikawa T."/>
            <person name="Otsuki T."/>
            <person name="Sugiyama T."/>
            <person name="Irie R."/>
            <person name="Wakamatsu A."/>
            <person name="Hayashi K."/>
            <person name="Sato H."/>
            <person name="Nagai K."/>
            <person name="Kimura K."/>
            <person name="Makita H."/>
            <person name="Sekine M."/>
            <person name="Obayashi M."/>
            <person name="Nishi T."/>
            <person name="Shibahara T."/>
            <person name="Tanaka T."/>
            <person name="Ishii S."/>
            <person name="Yamamoto J."/>
            <person name="Saito K."/>
            <person name="Kawai Y."/>
            <person name="Isono Y."/>
            <person name="Nakamura Y."/>
            <person name="Nagahari K."/>
            <person name="Murakami K."/>
            <person name="Yasuda T."/>
            <person name="Iwayanagi T."/>
            <person name="Wagatsuma M."/>
            <person name="Shiratori A."/>
            <person name="Sudo H."/>
            <person name="Hosoiri T."/>
            <person name="Kaku Y."/>
            <person name="Kodaira H."/>
            <person name="Kondo H."/>
            <person name="Sugawara M."/>
            <person name="Takahashi M."/>
            <person name="Kanda K."/>
            <person name="Yokoi T."/>
            <person name="Furuya T."/>
            <person name="Kikkawa E."/>
            <person name="Omura Y."/>
            <person name="Abe K."/>
            <person name="Kamihara K."/>
            <person name="Katsuta N."/>
            <person name="Sato K."/>
            <person name="Tanikawa M."/>
            <person name="Yamazaki M."/>
            <person name="Ninomiya K."/>
            <person name="Ishibashi T."/>
            <person name="Yamashita H."/>
            <person name="Murakawa K."/>
            <person name="Fujimori K."/>
            <person name="Tanai H."/>
            <person name="Kimata M."/>
            <person name="Watanabe M."/>
            <person name="Hiraoka S."/>
            <person name="Chiba Y."/>
            <person name="Ishida S."/>
            <person name="Ono Y."/>
            <person name="Takiguchi S."/>
            <person name="Watanabe S."/>
            <person name="Yosida M."/>
            <person name="Hotuta T."/>
            <person name="Kusano J."/>
            <person name="Kanehori K."/>
            <person name="Takahashi-Fujii A."/>
            <person name="Hara H."/>
            <person name="Tanase T.-O."/>
            <person name="Nomura Y."/>
            <person name="Togiya S."/>
            <person name="Komai F."/>
            <person name="Hara R."/>
            <person name="Takeuchi K."/>
            <person name="Arita M."/>
            <person name="Imose N."/>
            <person name="Musashino K."/>
            <person name="Yuuki H."/>
            <person name="Oshima A."/>
            <person name="Sasaki N."/>
            <person name="Aotsuka S."/>
            <person name="Yoshikawa Y."/>
            <person name="Matsunawa H."/>
            <person name="Ichihara T."/>
            <person name="Shiohata N."/>
            <person name="Sano S."/>
            <person name="Moriya S."/>
            <person name="Momiyama H."/>
            <person name="Satoh N."/>
            <person name="Takami S."/>
            <person name="Terashima Y."/>
            <person name="Suzuki O."/>
            <person name="Nakagawa S."/>
            <person name="Senoh A."/>
            <person name="Mizoguchi H."/>
            <person name="Goto Y."/>
            <person name="Shimizu F."/>
            <person name="Wakebe H."/>
            <person name="Hishigaki H."/>
            <person name="Watanabe T."/>
            <person name="Sugiyama A."/>
            <person name="Takemoto M."/>
            <person name="Kawakami B."/>
            <person name="Yamazaki M."/>
            <person name="Watanabe K."/>
            <person name="Kumagai A."/>
            <person name="Itakura S."/>
            <person name="Fukuzumi Y."/>
            <person name="Fujimori Y."/>
            <person name="Komiyama M."/>
            <person name="Tashiro H."/>
            <person name="Tanigami A."/>
            <person name="Fujiwara T."/>
            <person name="Ono T."/>
            <person name="Yamada K."/>
            <person name="Fujii Y."/>
            <person name="Ozaki K."/>
            <person name="Hirao M."/>
            <person name="Ohmori Y."/>
            <person name="Kawabata A."/>
            <person name="Hikiji T."/>
            <person name="Kobatake N."/>
            <person name="Inagaki H."/>
            <person name="Ikema Y."/>
            <person name="Okamoto S."/>
            <person name="Okitani R."/>
            <person name="Kawakami T."/>
            <person name="Noguchi S."/>
            <person name="Itoh T."/>
            <person name="Shigeta K."/>
            <person name="Senba T."/>
            <person name="Matsumura K."/>
            <person name="Nakajima Y."/>
            <person name="Mizuno T."/>
            <person name="Morinaga M."/>
            <person name="Sasaki M."/>
            <person name="Togashi T."/>
            <person name="Oyama M."/>
            <person name="Hata H."/>
            <person name="Watanabe M."/>
            <person name="Komatsu T."/>
            <person name="Mizushima-Sugano J."/>
            <person name="Satoh T."/>
            <person name="Shirai Y."/>
            <person name="Takahashi Y."/>
            <person name="Nakagawa K."/>
            <person name="Okumura K."/>
            <person name="Nagase T."/>
            <person name="Nomura N."/>
            <person name="Kikuchi H."/>
            <person name="Masuho Y."/>
            <person name="Yamashita R."/>
            <person name="Nakai K."/>
            <person name="Yada T."/>
            <person name="Nakamura Y."/>
            <person name="Ohara O."/>
            <person name="Isogai T."/>
            <person name="Sugano S."/>
        </authorList>
    </citation>
    <scope>NUCLEOTIDE SEQUENCE [LARGE SCALE MRNA] OF 1928-2090 (ISOFORM 7)</scope>
    <source>
        <tissue>Hepatoma</tissue>
    </source>
</reference>
<reference key="10">
    <citation type="journal article" date="2002" name="J. Cell Sci.">
        <title>CEP110 and ninein are located in a specific domain of the centrosome associated with centrosome maturation.</title>
        <authorList>
            <person name="Ou Y.Y."/>
            <person name="Mack G.J."/>
            <person name="Zhang M."/>
            <person name="Rattner J.B."/>
        </authorList>
    </citation>
    <scope>FUNCTION</scope>
    <scope>SUBCELLULAR LOCATION</scope>
</reference>
<reference key="11">
    <citation type="journal article" date="2002" name="J. Cell Biol.">
        <title>Assembly of centrosomal proteins and microtubule organization depends on PCM-1.</title>
        <authorList>
            <person name="Dammermann A."/>
            <person name="Merdes A."/>
        </authorList>
    </citation>
    <scope>SUBCELLULAR LOCATION</scope>
</reference>
<reference key="12">
    <citation type="journal article" date="2003" name="Biochem. Biophys. Res. Commun.">
        <title>Molecular characterization of human ninein protein: two distinct subdomains required for centrosomal targeting and regulating signals in cell cycle.</title>
        <authorList>
            <person name="Chen C.-H."/>
            <person name="Howng S.-L."/>
            <person name="Cheng T.-S."/>
            <person name="Chou M.-H."/>
            <person name="Huang C.-Y."/>
            <person name="Hong Y.-R."/>
        </authorList>
    </citation>
    <scope>HOMOOLIGOMERIZATION</scope>
    <scope>SUBCELLULAR LOCATION</scope>
    <scope>DEVELOPMENTAL STAGE</scope>
    <scope>DOMAIN</scope>
    <scope>PHOSPHORYLATION</scope>
</reference>
<reference key="13">
    <citation type="journal article" date="2003" name="Nature">
        <title>Proteomic characterization of the human centrosome by protein correlation profiling.</title>
        <authorList>
            <person name="Andersen J.S."/>
            <person name="Wilkinson C.J."/>
            <person name="Mayor T."/>
            <person name="Mortensen P."/>
            <person name="Nigg E.A."/>
            <person name="Mann M."/>
        </authorList>
    </citation>
    <scope>IDENTIFICATION BY MASS SPECTROMETRY</scope>
    <scope>SUBCELLULAR LOCATION [LARGE SCALE ANALYSIS]</scope>
    <source>
        <tissue>Lymphoblast</tissue>
    </source>
</reference>
<reference key="14">
    <citation type="journal article" date="2004" name="FEBS Lett.">
        <title>A novel ninein-interaction protein, CGI-99, blocks ninein phosphorylation by GSK3beta and is highly expressed in brain tumors.</title>
        <authorList>
            <person name="Howng S.-L."/>
            <person name="Hsu H.-C."/>
            <person name="Cheng T.-S."/>
            <person name="Lee Y.-L."/>
            <person name="Chang L.-K."/>
            <person name="Lu P.-J."/>
            <person name="Hong Y.-R."/>
        </authorList>
    </citation>
    <scope>INTERACTION WITH C14ORF166</scope>
</reference>
<reference key="15">
    <citation type="journal article" date="1998" name="Arthritis Rheum.">
        <title>Autoantibodies to a group of centrosomal proteins in human autoimmune sera reactive with the centrosome.</title>
        <authorList>
            <person name="Mack G.J."/>
            <person name="Rees J."/>
            <person name="Sandblom O."/>
            <person name="Balczon R."/>
            <person name="Fritzler M.J."/>
            <person name="Rattner J.B."/>
        </authorList>
    </citation>
    <scope>AUTOANTIBODY</scope>
</reference>
<reference key="16">
    <citation type="journal article" date="2003" name="BMC Pediatr.">
        <title>Spectrum of centrosome autoantibodies in childhood varicella and post-varicella acute cerebellar ataxia.</title>
        <authorList>
            <person name="Fritzler M.J."/>
            <person name="Zhang M."/>
            <person name="Stinton L.M."/>
            <person name="Rattner J.B."/>
        </authorList>
    </citation>
    <scope>AUTOANTIBODY</scope>
</reference>
<reference key="17">
    <citation type="journal article" date="2007" name="Science">
        <title>ATM and ATR substrate analysis reveals extensive protein networks responsive to DNA damage.</title>
        <authorList>
            <person name="Matsuoka S."/>
            <person name="Ballif B.A."/>
            <person name="Smogorzewska A."/>
            <person name="McDonald E.R. III"/>
            <person name="Hurov K.E."/>
            <person name="Luo J."/>
            <person name="Bakalarski C.E."/>
            <person name="Zhao Z."/>
            <person name="Solimini N."/>
            <person name="Lerenthal Y."/>
            <person name="Shiloh Y."/>
            <person name="Gygi S.P."/>
            <person name="Elledge S.J."/>
        </authorList>
    </citation>
    <scope>PHOSPHORYLATION [LARGE SCALE ANALYSIS] AT SER-1550</scope>
    <scope>IDENTIFICATION BY MASS SPECTROMETRY [LARGE SCALE ANALYSIS]</scope>
    <source>
        <tissue>Embryonic kidney</tissue>
    </source>
</reference>
<reference key="18">
    <citation type="journal article" date="2009" name="Sci. Signal.">
        <title>Quantitative phosphoproteomic analysis of T cell receptor signaling reveals system-wide modulation of protein-protein interactions.</title>
        <authorList>
            <person name="Mayya V."/>
            <person name="Lundgren D.H."/>
            <person name="Hwang S.-I."/>
            <person name="Rezaul K."/>
            <person name="Wu L."/>
            <person name="Eng J.K."/>
            <person name="Rodionov V."/>
            <person name="Han D.K."/>
        </authorList>
    </citation>
    <scope>PHOSPHORYLATION [LARGE SCALE ANALYSIS] AT SER-1550</scope>
    <scope>IDENTIFICATION BY MASS SPECTROMETRY [LARGE SCALE ANALYSIS]</scope>
    <source>
        <tissue>Leukemic T-cell</tissue>
    </source>
</reference>
<reference key="19">
    <citation type="journal article" date="2010" name="Int. J. Oncol.">
        <title>Functional characterization of AIBp, a novel Aurora-A binding protein in centrosome structure and spindle formation.</title>
        <authorList>
            <person name="Lieu A.S."/>
            <person name="Cheng T.S."/>
            <person name="Chou C.H."/>
            <person name="Wu C.H."/>
            <person name="Hsu C.Y."/>
            <person name="Huang C.Y."/>
            <person name="Chang L.K."/>
            <person name="Loh J.K."/>
            <person name="Chang C.S."/>
            <person name="Hsu C.M."/>
            <person name="Howng S.L."/>
            <person name="Hong Y.R."/>
        </authorList>
    </citation>
    <scope>INTERACTION WITH AUNIP</scope>
</reference>
<reference key="20">
    <citation type="journal article" date="2013" name="EMBO J.">
        <title>Kif3a interacts with Dynactin subunit p150 Glued to organize centriole subdistal appendages.</title>
        <authorList>
            <person name="Kodani A."/>
            <person name="Salome Sirerol-Piquer M."/>
            <person name="Seol A."/>
            <person name="Garcia-Verdugo J.M."/>
            <person name="Reiter J.F."/>
        </authorList>
    </citation>
    <scope>FUNCTION</scope>
    <scope>SUBCELLULAR LOCATION</scope>
</reference>
<reference key="21">
    <citation type="journal article" date="2013" name="J. Proteome Res.">
        <title>Toward a comprehensive characterization of a human cancer cell phosphoproteome.</title>
        <authorList>
            <person name="Zhou H."/>
            <person name="Di Palma S."/>
            <person name="Preisinger C."/>
            <person name="Peng M."/>
            <person name="Polat A.N."/>
            <person name="Heck A.J."/>
            <person name="Mohammed S."/>
        </authorList>
    </citation>
    <scope>PHOSPHORYLATION [LARGE SCALE ANALYSIS] AT SER-152 AND SER-1550</scope>
    <scope>IDENTIFICATION BY MASS SPECTROMETRY [LARGE SCALE ANALYSIS]</scope>
    <source>
        <tissue>Cervix carcinoma</tissue>
        <tissue>Erythroleukemia</tissue>
    </source>
</reference>
<reference key="22">
    <citation type="journal article" date="2017" name="Nat. Commun.">
        <title>Hierarchical assembly of centriole subdistal appendages via centrosome binding proteins CCDC120 and CCDC68.</title>
        <authorList>
            <person name="Huang N."/>
            <person name="Xia Y."/>
            <person name="Zhang D."/>
            <person name="Wang S."/>
            <person name="Bao Y."/>
            <person name="He R."/>
            <person name="Teng J."/>
            <person name="Chen J."/>
        </authorList>
    </citation>
    <scope>INTERACTION WITH CCDC120</scope>
</reference>
<reference key="23">
    <citation type="journal article" date="2008" name="Nature">
        <title>DNA sequencing of a cytogenetically normal acute myeloid leukaemia genome.</title>
        <authorList>
            <person name="Ley T.J."/>
            <person name="Mardis E.R."/>
            <person name="Ding L."/>
            <person name="Fulton B."/>
            <person name="McLellan M.D."/>
            <person name="Chen K."/>
            <person name="Dooling D."/>
            <person name="Dunford-Shore B.H."/>
            <person name="McGrath S."/>
            <person name="Hickenbotham M."/>
            <person name="Cook L."/>
            <person name="Abbott R."/>
            <person name="Larson D.E."/>
            <person name="Koboldt D.C."/>
            <person name="Pohl C."/>
            <person name="Smith S."/>
            <person name="Hawkins A."/>
            <person name="Abbott S."/>
            <person name="Locke D."/>
            <person name="Hillier L.W."/>
            <person name="Miner T."/>
            <person name="Fulton L."/>
            <person name="Magrini V."/>
            <person name="Wylie T."/>
            <person name="Glasscock J."/>
            <person name="Conyers J."/>
            <person name="Sander N."/>
            <person name="Shi X."/>
            <person name="Osborne J.R."/>
            <person name="Minx P."/>
            <person name="Gordon D."/>
            <person name="Chinwalla A."/>
            <person name="Zhao Y."/>
            <person name="Ries R.E."/>
            <person name="Payton J.E."/>
            <person name="Westervelt P."/>
            <person name="Tomasson M.H."/>
            <person name="Watson M."/>
            <person name="Baty J."/>
            <person name="Ivanovich J."/>
            <person name="Heath S."/>
            <person name="Shannon W.D."/>
            <person name="Nagarajan R."/>
            <person name="Walter M.J."/>
            <person name="Link D.C."/>
            <person name="Graubert T.A."/>
            <person name="DiPersio J.F."/>
            <person name="Wilson R.K."/>
        </authorList>
    </citation>
    <scope>VARIANT [LARGE SCALE ANALYSIS] GLU-1320</scope>
</reference>
<reference key="24">
    <citation type="journal article" date="2012" name="J. Clin. Endocrinol. Metab.">
        <title>Novel microcephalic primordial dwarfism disorder associated with variants in the centrosomal protein ninein.</title>
        <authorList>
            <person name="Dauber A."/>
            <person name="Lafranchi S.H."/>
            <person name="Maliga Z."/>
            <person name="Lui J.C."/>
            <person name="Moon J.E."/>
            <person name="McDeed C."/>
            <person name="Henke K."/>
            <person name="Zonana J."/>
            <person name="Kingman G.A."/>
            <person name="Pers T.H."/>
            <person name="Baron J."/>
            <person name="Rosenfeld R.G."/>
            <person name="Hirschhorn J.N."/>
            <person name="Harris M.P."/>
            <person name="Hwa V."/>
        </authorList>
    </citation>
    <scope>VARIANTS SCKL7 ARG-1222 AND SER-1709</scope>
</reference>
<comment type="function">
    <text evidence="7 12 16">Centrosomal protein required in the positioning and anchorage of the microtubule minus-end in epithelial cells (PubMed:15190203, PubMed:23386061). May also act as a centrosome maturation factor (PubMed:11956314). May play a role in microtubule nucleation, by recruiting the gamma-tubulin ring complex to the centrosome (PubMed:15190203). Overexpression does not perturb nucleation or elongation of microtubules but suppresses release of microtubules (PubMed:15190203). Required for centriole organization and microtubule anchoring at the mother centriole (PubMed:23386061).</text>
</comment>
<comment type="subunit">
    <text evidence="1 5 11 14 17">Homooligomer. Interacts with GSK3B/GSK3-beta via its C-terminal domain (PubMed:11004522). Interacts with C14ORF166, such interaction may prevent its phosphorylation by GSK3B (PubMed:15147888). Interacts with AUNIP (via N-terminus) (PubMed:20596670). Identified in a complex with AUNIP and AURKA (PubMed:20596670). Interacts with CCDC120 (PubMed:28422092). Interacts (via C-terminus) with CEP250 (By similarity). Interacts with CEP170 (By similarity). Interacts with the gamma-tubulin ring complex component TUBGCP3 (By similarity). Interacts with gamma-tubulin (By similarity). Isoform 6 does not interact with CEP170 or CEP250 (By similarity).</text>
</comment>
<comment type="interaction">
    <interactant intactId="EBI-1164022">
        <id>Q8N4C6</id>
    </interactant>
    <interactant intactId="EBI-744556">
        <id>Q96HB5</id>
        <label>CCDC120</label>
    </interactant>
    <organismsDiffer>false</organismsDiffer>
    <experiments>11</experiments>
</comment>
<comment type="interaction">
    <interactant intactId="EBI-1164022">
        <id>Q8N4C6</id>
    </interactant>
    <interactant intactId="EBI-373586">
        <id>P49841</id>
        <label>GSK3B</label>
    </interactant>
    <organismsDiffer>false</organismsDiffer>
    <experiments>3</experiments>
</comment>
<comment type="interaction">
    <interactant intactId="EBI-1164022">
        <id>Q8N4C6</id>
    </interactant>
    <interactant intactId="EBI-1104547">
        <id>Q9Y224</id>
        <label>RTRAF</label>
    </interactant>
    <organismsDiffer>false</organismsDiffer>
    <experiments>4</experiments>
</comment>
<comment type="subcellular location">
    <subcellularLocation>
        <location evidence="5 7 8 9 10 12">Cytoplasm</location>
        <location evidence="5 7 8 9 10 12">Cytoskeleton</location>
        <location evidence="5 7 8 9 10 12">Microtubule organizing center</location>
        <location evidence="5 7 8 9 10 12">Centrosome</location>
    </subcellularLocation>
    <subcellularLocation>
        <location evidence="16">Cytoplasm</location>
        <location evidence="16">Cytoskeleton</location>
        <location evidence="16">Microtubule organizing center</location>
        <location evidence="16">Centrosome</location>
        <location evidence="16">Centriole</location>
    </subcellularLocation>
    <text evidence="7 8 16">Component of the core centrosome. Arranged in a tubular conformation with an open and a closed end within the centrosome. In the mother centrosome, it localizes at both ends of the centrosome tube, including the site of centrosome duplication, while in the daughter centrosome it is present only at the closed end. Requires PCM1 for centrosome localization. Localizes to the subdistal appendage region of the centriole in a DCTN1-dependent manner.</text>
</comment>
<comment type="subcellular location">
    <molecule>Isoform 6</molecule>
    <subcellularLocation>
        <location evidence="1">Cytoplasm</location>
    </subcellularLocation>
    <text evidence="1">Seems to have a dominant-negative effect on localization of other isoforms, promoting their dissociation from the centrosome.</text>
</comment>
<comment type="alternative products">
    <event type="alternative splicing"/>
    <isoform>
        <id>Q8N4C6-1</id>
        <name>1</name>
        <name>Lm</name>
        <sequence type="displayed"/>
    </isoform>
    <isoform>
        <id>Q8N4C6-2</id>
        <name>2</name>
        <name>Isotype 3</name>
        <sequence type="described" ref="VSP_010952"/>
    </isoform>
    <isoform>
        <id>Q8N4C6-10</id>
        <name>3</name>
        <name>Isotype 2</name>
        <sequence type="described" ref="VSP_010952 VSP_010960"/>
    </isoform>
    <isoform>
        <id>Q8N4C6-4</id>
        <name>4</name>
        <name>Isotype 1</name>
        <sequence type="described" ref="VSP_010952 VSP_010957 VSP_010958"/>
    </isoform>
    <isoform>
        <id>Q8N4C6-5</id>
        <name>5</name>
        <sequence type="described" ref="VSP_010950"/>
    </isoform>
    <isoform>
        <id>Q8N4C6-6</id>
        <name>6</name>
        <sequence type="described" ref="VSP_010953 VSP_010954 VSP_010955 VSP_010956"/>
    </isoform>
    <isoform>
        <id>Q8N4C6-7</id>
        <name>7</name>
        <name>B</name>
        <sequence type="described" ref="VSP_010960"/>
    </isoform>
    <isoform>
        <id>Q8N4C6-9</id>
        <name>8</name>
        <sequence type="described" ref="VSP_040039"/>
    </isoform>
    <isoform>
        <id>Q8N4C6-11</id>
        <name>9</name>
        <sequence type="described" ref="VSP_010953"/>
    </isoform>
</comment>
<comment type="tissue specificity">
    <text evidence="5 6">Ubiquitous. Highly expressed in heart and skeletal muscle. Isoform 1 is more expressed than isoform 5.</text>
</comment>
<comment type="developmental stage">
    <text evidence="9">In interphase cells, it is localized in the centrosome. Decreases in metaphase and anaphase and reappears in telophase.</text>
</comment>
<comment type="domain">
    <text evidence="1 9 12">There is conflicting information regarding the regions required for centrosomal localization. One study shows that the region 1601-1682 is necessary and sufficient for targeting to the centrosome (PubMed:12927815). Another study shows that a separate region, 1291-1575, is important for centrosomal localization (PubMed:15190203). However, a third study shows that the coiled-coil region (373-1885) is not sufficient for centrosomal localization and instead localizes to cytoplasmic speckles (By similarity). The observed differences might be due to oligomerization of the longer coiled-coil domain-containing sequence, which would mask the shorter centrosomal targeting sequences (By similarity).</text>
</comment>
<comment type="domain">
    <text evidence="1">The N-terminal domain is important for targeting to the mother centriole, although it is not sufficient by itself for centrosomal localization.</text>
</comment>
<comment type="PTM">
    <text evidence="9">Phosphorylated by AURKA/Aurora kinase A and PKA kinases but not CK2 or AURKB/ Aurora kinase B.</text>
</comment>
<comment type="disease" evidence="15">
    <disease id="DI-03545">
        <name>Seckel syndrome 7</name>
        <acronym>SCKL7</acronym>
        <description>A rare autosomal recessive disorder characterized by proportionate dwarfism of prenatal onset associated with low birth weight, growth retardation, severe microcephaly with a bird-headed like appearance, and intellectual disability.</description>
        <dbReference type="MIM" id="614851"/>
    </disease>
    <text>The disease is caused by variants affecting the gene represented in this entry.</text>
</comment>
<comment type="miscellaneous">
    <text>Antibodies against NIN are present in sera from patients with autoimmune diseases that developed autoantibodies against centrosomal proteins.</text>
</comment>
<comment type="miscellaneous">
    <molecule>Isoform 2</molecule>
    <text evidence="24">Dubious isoform produced through aberrant splice sites.</text>
</comment>
<comment type="miscellaneous">
    <molecule>Isoform 3</molecule>
    <text evidence="24">Dubious isoform produced through aberrant splice sites.</text>
</comment>
<comment type="miscellaneous">
    <molecule>Isoform 4</molecule>
    <text evidence="24">Dubious isoform produced through aberrant splice sites.</text>
</comment>
<comment type="sequence caution" evidence="24">
    <conflict type="erroneous initiation">
        <sequence resource="EMBL-CDS" id="AAH65521"/>
    </conflict>
    <text>Extended N-terminus.</text>
</comment>
<comment type="sequence caution" evidence="24">
    <conflict type="miscellaneous discrepancy">
        <sequence resource="EMBL-CDS" id="AAH65521"/>
    </conflict>
    <text>Contaminating sequence. Potential poly-A sequence.</text>
</comment>
<comment type="sequence caution" evidence="24">
    <conflict type="miscellaneous discrepancy">
        <sequence resource="EMBL-CDS" id="AAK00628"/>
    </conflict>
    <text>Several sequencing errors.</text>
</comment>
<comment type="sequence caution" evidence="24">
    <conflict type="miscellaneous discrepancy">
        <sequence resource="EMBL-CDS" id="AAK00629"/>
    </conflict>
    <text>Several sequencing errors and frameshifts.</text>
</comment>
<comment type="sequence caution" evidence="24">
    <conflict type="miscellaneous discrepancy">
        <sequence resource="EMBL-CDS" id="AAK00630"/>
    </conflict>
    <text>Several sequencing errors.</text>
</comment>
<comment type="sequence caution" evidence="24">
    <conflict type="erroneous initiation">
        <sequence resource="EMBL-CDS" id="BAB13391"/>
    </conflict>
    <text>Extended N-terminus.</text>
</comment>
<comment type="sequence caution" evidence="24">
    <conflict type="erroneous initiation">
        <sequence resource="EMBL-CDS" id="BAB15640"/>
    </conflict>
    <text>Truncated N-terminus.</text>
</comment>
<comment type="online information" name="Atlas of Genetics and Cytogenetics in Oncology and Haematology">
    <link uri="https://atlasgeneticsoncology.org/gene/176/NIN"/>
</comment>
<protein>
    <recommendedName>
        <fullName>Ninein</fullName>
        <shortName>hNinein</shortName>
    </recommendedName>
    <alternativeName>
        <fullName>Glycogen synthase kinase 3 beta-interacting protein</fullName>
        <shortName>GSK3B-interacting protein</shortName>
    </alternativeName>
</protein>
<sequence length="2090" mass="243249">MDEVEQDQHEARLKELFDSFDTTGTGSLGQEELTDLCHMLSLEEVAPVLQQTLLQDNLLGRVHFDQFKEALILILSRTLSNEEHFQEPDCSLEAQPKYVRGGKRYGRRSLPEFQESVEEFPEVTVIEPLDEEARPSHIPAGDCSEHWKTQRSEEYEAEGQLRFWNPDDLNASQSGSSPPQDWIEEKLQEVCEDLGITRDGHLNRKKLVSICEQYGLQNVDGEMLEEVFHNLDPDGTMSVEDFFYGLFKNGKSLTPSASTPYRQLKRHLSMQSFDESGRRTTTSSAMTSTIGFRVFSCLDDGMGHASVERILDTWQEEGIENSQEILKALDFSLDGNINLTELTLALENELLVTKNSIHQAALASFKAEIRHLLERVDQVVREKEKLRSDLDKAEKLKSLMASEVDDHHAAIERRNEYNLRKLDEEYKERIAALKNELRKEREQILQQAGKQRLELEQEIEKAKTEENYIRDRLALSLKENSRLENELLENAEKLAEYENLTNKLQRNLENVLAEKFGDLDPSSAEFFLQEERLTQMRNEYERQCRVLQDQVDELQSELEEYRAQGRVLRLPLKNSPSEEVEANSGGIEPEHGLGSEECNPLNMSIEAELVIEQMKEQHHRDICCLRLELEDKVRHYEKQLDETVVSCKKAQENMKQRHENETHTLEKQISDLKNEIAELQGQAAVLKEAHHEATCRHEEEKKQLQVKLEEEKTHLQEKLRLQHEMELKARLTQAQASFEREREGLQSSAWTEEKVRGLTQELEQFHQEQLTSLVEKHTLEKEELRKELLEKHQRELQEGREKMETECNRRTSQIEAQFQSDCQKVTERCESALQSLEGRYRQELKDLQEQQREEKSQWEFEKDELTQECAEAQELLKETLKREKTTSLVLTQEREMLEKTYKEHLNSMVVERQQLLQDLEDLRNVSETQQSLLSDQILELKSSHKRELREREEVLCQAGASEQLASQRLERLEMEHDQERQEMMSKLLAMENIHKATCETADRERAEMSTEISRLQSKIKEMQQATSPLSMLQSGCQVIGEEEVEGDGALSLLQQGEQLLEENGDVLLSLQRAHEQAVKENVKMATEISRLQQRLQKLEPGLVMSSCLDEPATEFFGNTAEQTEQFLQQNRTKQVEGVTRRHVLSDLEDDEVRDLGSTGTSSVQRQEVKIEESEASVEGFSELENSEETRTESWELKNQISQLQEQLMMLCADCDRASEKKQDLLFDVSVLKKKLKMLERIPEASPKYKLLYEDVSRENDCLQEELRMMETRYDEALENNKELTAEVFRLQDELKKMEEVTETFLSLEKSYDEVKIENEGLNVLVLRLQGKIEKLQESVVQRCDCCLWEASLENLEIEPDGNILQLNQTLEECVPRVRSVHHVIEECKQENQYLEGNTQLLEKVKAHEIAWLHGTIQTHQERPRVQNQVILEENTTLLGFQDKHFQHQATIAELELEKTKLQELTRKLKERVTILVKQKDVLSHGEKEEELKAMMHDLQITCSEMQQKVELLRYESEKLQQENSILRNEITTLNEEDSISNLKLGTLNGSQEEMWQKTETVKQENAAVQKMVENLKKQISELKIKNQQLDLENTELSQKNSQNQEKLQELNQRLTEMLCQKEKEPGNSALEEREQEKFNLKEELERCKVQSSTLVSSLEAELSEVKIQTHIVQQENHLLKDELEKMKQLHRCPDLSDFQQKISSVLSYNEKLLKEKEALSEELNSCVDKLAKSSLLEHRIATMKQEQKSWEHQSASLKSQLVASQEKVQNLEDTVQNVNLQMSRMKSDLRVTQQEKEALKQEVMSLHKQLQNAGGKSWAPEIATHPSGLHNQQKRLSWDKLDHLMNEEQQLLWQENERLQTMVQNTKAELTHSREKVRQLESNLLPKHQKHLNPSGTMNPTEQEKLSLKRECDQFQKEQSPANRKVSQMNSLEQELETIHLENEGLKKKQVKLDEQLMEMQHLRSTATPSPSPHAWDLQLLQQQACPMVPREQFLQLQRQLLQAERINQHLQEELENRTSETNTPQGNQEQLVTVMEERMIEVEQKLKLVKRLLQEKVNQLKEQVSLPGHLCSPTSHSSFNSSFTSLYCH</sequence>